<proteinExistence type="inferred from homology"/>
<gene>
    <name evidence="1" type="primary">dnaA</name>
    <name type="ordered locus">Exig_0001</name>
</gene>
<protein>
    <recommendedName>
        <fullName evidence="1">Chromosomal replication initiator protein DnaA</fullName>
    </recommendedName>
</protein>
<keyword id="KW-0067">ATP-binding</keyword>
<keyword id="KW-0963">Cytoplasm</keyword>
<keyword id="KW-0235">DNA replication</keyword>
<keyword id="KW-0238">DNA-binding</keyword>
<keyword id="KW-0446">Lipid-binding</keyword>
<keyword id="KW-0547">Nucleotide-binding</keyword>
<keyword id="KW-1185">Reference proteome</keyword>
<comment type="function">
    <text evidence="1">Plays an essential role in the initiation and regulation of chromosomal replication. ATP-DnaA binds to the origin of replication (oriC) to initiate formation of the DNA replication initiation complex once per cell cycle. Binds the DnaA box (a 9 base pair repeat at the origin) and separates the double-stranded (ds)DNA. Forms a right-handed helical filament on oriC DNA; dsDNA binds to the exterior of the filament while single-stranded (ss)DNA is stabiized in the filament's interior. The ATP-DnaA-oriC complex binds and stabilizes one strand of the AT-rich DNA unwinding element (DUE), permitting loading of DNA polymerase. After initiation quickly degrades to an ADP-DnaA complex that is not apt for DNA replication. Binds acidic phospholipids.</text>
</comment>
<comment type="subunit">
    <text evidence="1">Oligomerizes as a right-handed, spiral filament on DNA at oriC.</text>
</comment>
<comment type="subcellular location">
    <subcellularLocation>
        <location evidence="1">Cytoplasm</location>
    </subcellularLocation>
</comment>
<comment type="domain">
    <text evidence="1">Domain I is involved in oligomerization and binding regulators, domain II is flexibile and of varying length in different bacteria, domain III forms the AAA+ region, while domain IV binds dsDNA.</text>
</comment>
<comment type="similarity">
    <text evidence="1">Belongs to the DnaA family.</text>
</comment>
<organism>
    <name type="scientific">Exiguobacterium sibiricum (strain DSM 17290 / CCUG 55495 / CIP 109462 / JCM 13490 / 255-15)</name>
    <dbReference type="NCBI Taxonomy" id="262543"/>
    <lineage>
        <taxon>Bacteria</taxon>
        <taxon>Bacillati</taxon>
        <taxon>Bacillota</taxon>
        <taxon>Bacilli</taxon>
        <taxon>Bacillales</taxon>
        <taxon>Bacillales Family XII. Incertae Sedis</taxon>
        <taxon>Exiguobacterium</taxon>
    </lineage>
</organism>
<evidence type="ECO:0000255" key="1">
    <source>
        <dbReference type="HAMAP-Rule" id="MF_00377"/>
    </source>
</evidence>
<accession>B1YGB2</accession>
<name>DNAA_EXIS2</name>
<sequence length="464" mass="52421">MKNAAELWHNVLSVIEEEQRTPKASYDMWLKSTEGVTLNGTTLIVSAPAAFTVTWLERQYLSLLEDTVEEVTGSRLDIQFIEEGQAKHMLDRQNEEVEVMEVAPAKTKAQKTPKSSDELVMSELGQLNEKYTFDTFVIGSGNRFAHAASLAVAEAPAKAYNPLFIYGGVGLGKTHLMHAIGQYVQDQKLGTKIAYVSSEQFTNDFINSIRDNKTVQFRNKYRNIDVLLIDDIQFLAGKEQTQEEFFHTFNALHNDQKQIIISSDRPPKEIPTLEDRLRSRFEWGLITDITPPDLETRIAILRKKANAEQLDVSNEVMLYIASQIDTNIRELEGALTRVIAYANLVGRTIDPNVAAEALHNIMPASEPRKVTIRDIQESVSKHFNLPFDDLKAKKRTKSIAFPRQIAMYLSREMTESSLPKIGEEFGGRDHTTVIHAHEKISTLVKSDGETGKVIEQIKHELKHS</sequence>
<dbReference type="EMBL" id="CP001022">
    <property type="protein sequence ID" value="ACB59489.1"/>
    <property type="molecule type" value="Genomic_DNA"/>
</dbReference>
<dbReference type="RefSeq" id="WP_012368915.1">
    <property type="nucleotide sequence ID" value="NC_010556.1"/>
</dbReference>
<dbReference type="SMR" id="B1YGB2"/>
<dbReference type="STRING" id="262543.Exig_0001"/>
<dbReference type="KEGG" id="esi:Exig_0001"/>
<dbReference type="eggNOG" id="COG0593">
    <property type="taxonomic scope" value="Bacteria"/>
</dbReference>
<dbReference type="HOGENOM" id="CLU_026910_3_1_9"/>
<dbReference type="OrthoDB" id="9807019at2"/>
<dbReference type="Proteomes" id="UP000001681">
    <property type="component" value="Chromosome"/>
</dbReference>
<dbReference type="GO" id="GO:0005737">
    <property type="term" value="C:cytoplasm"/>
    <property type="evidence" value="ECO:0007669"/>
    <property type="project" value="UniProtKB-SubCell"/>
</dbReference>
<dbReference type="GO" id="GO:0005886">
    <property type="term" value="C:plasma membrane"/>
    <property type="evidence" value="ECO:0007669"/>
    <property type="project" value="TreeGrafter"/>
</dbReference>
<dbReference type="GO" id="GO:0005524">
    <property type="term" value="F:ATP binding"/>
    <property type="evidence" value="ECO:0007669"/>
    <property type="project" value="UniProtKB-UniRule"/>
</dbReference>
<dbReference type="GO" id="GO:0016887">
    <property type="term" value="F:ATP hydrolysis activity"/>
    <property type="evidence" value="ECO:0007669"/>
    <property type="project" value="InterPro"/>
</dbReference>
<dbReference type="GO" id="GO:0003688">
    <property type="term" value="F:DNA replication origin binding"/>
    <property type="evidence" value="ECO:0007669"/>
    <property type="project" value="UniProtKB-UniRule"/>
</dbReference>
<dbReference type="GO" id="GO:0008289">
    <property type="term" value="F:lipid binding"/>
    <property type="evidence" value="ECO:0007669"/>
    <property type="project" value="UniProtKB-KW"/>
</dbReference>
<dbReference type="GO" id="GO:0006270">
    <property type="term" value="P:DNA replication initiation"/>
    <property type="evidence" value="ECO:0007669"/>
    <property type="project" value="UniProtKB-UniRule"/>
</dbReference>
<dbReference type="GO" id="GO:0006275">
    <property type="term" value="P:regulation of DNA replication"/>
    <property type="evidence" value="ECO:0007669"/>
    <property type="project" value="UniProtKB-UniRule"/>
</dbReference>
<dbReference type="CDD" id="cd00009">
    <property type="entry name" value="AAA"/>
    <property type="match status" value="1"/>
</dbReference>
<dbReference type="CDD" id="cd06571">
    <property type="entry name" value="Bac_DnaA_C"/>
    <property type="match status" value="1"/>
</dbReference>
<dbReference type="FunFam" id="1.10.1750.10:FF:000003">
    <property type="entry name" value="Chromosomal replication initiator protein DnaA"/>
    <property type="match status" value="1"/>
</dbReference>
<dbReference type="FunFam" id="1.10.8.60:FF:000003">
    <property type="entry name" value="Chromosomal replication initiator protein DnaA"/>
    <property type="match status" value="1"/>
</dbReference>
<dbReference type="FunFam" id="3.40.50.300:FF:000150">
    <property type="entry name" value="Chromosomal replication initiator protein DnaA"/>
    <property type="match status" value="1"/>
</dbReference>
<dbReference type="Gene3D" id="1.10.1750.10">
    <property type="match status" value="1"/>
</dbReference>
<dbReference type="Gene3D" id="1.10.8.60">
    <property type="match status" value="1"/>
</dbReference>
<dbReference type="Gene3D" id="3.30.300.180">
    <property type="match status" value="1"/>
</dbReference>
<dbReference type="Gene3D" id="3.40.50.300">
    <property type="entry name" value="P-loop containing nucleotide triphosphate hydrolases"/>
    <property type="match status" value="1"/>
</dbReference>
<dbReference type="HAMAP" id="MF_00377">
    <property type="entry name" value="DnaA_bact"/>
    <property type="match status" value="1"/>
</dbReference>
<dbReference type="InterPro" id="IPR003593">
    <property type="entry name" value="AAA+_ATPase"/>
</dbReference>
<dbReference type="InterPro" id="IPR001957">
    <property type="entry name" value="Chromosome_initiator_DnaA"/>
</dbReference>
<dbReference type="InterPro" id="IPR020591">
    <property type="entry name" value="Chromosome_initiator_DnaA-like"/>
</dbReference>
<dbReference type="InterPro" id="IPR018312">
    <property type="entry name" value="Chromosome_initiator_DnaA_CS"/>
</dbReference>
<dbReference type="InterPro" id="IPR013159">
    <property type="entry name" value="DnaA_C"/>
</dbReference>
<dbReference type="InterPro" id="IPR013317">
    <property type="entry name" value="DnaA_dom"/>
</dbReference>
<dbReference type="InterPro" id="IPR024633">
    <property type="entry name" value="DnaA_N_dom"/>
</dbReference>
<dbReference type="InterPro" id="IPR038454">
    <property type="entry name" value="DnaA_N_sf"/>
</dbReference>
<dbReference type="InterPro" id="IPR027417">
    <property type="entry name" value="P-loop_NTPase"/>
</dbReference>
<dbReference type="InterPro" id="IPR010921">
    <property type="entry name" value="Trp_repressor/repl_initiator"/>
</dbReference>
<dbReference type="NCBIfam" id="TIGR00362">
    <property type="entry name" value="DnaA"/>
    <property type="match status" value="1"/>
</dbReference>
<dbReference type="NCBIfam" id="NF010686">
    <property type="entry name" value="PRK14086.1"/>
    <property type="match status" value="1"/>
</dbReference>
<dbReference type="PANTHER" id="PTHR30050">
    <property type="entry name" value="CHROMOSOMAL REPLICATION INITIATOR PROTEIN DNAA"/>
    <property type="match status" value="1"/>
</dbReference>
<dbReference type="PANTHER" id="PTHR30050:SF2">
    <property type="entry name" value="CHROMOSOMAL REPLICATION INITIATOR PROTEIN DNAA"/>
    <property type="match status" value="1"/>
</dbReference>
<dbReference type="Pfam" id="PF00308">
    <property type="entry name" value="Bac_DnaA"/>
    <property type="match status" value="1"/>
</dbReference>
<dbReference type="Pfam" id="PF08299">
    <property type="entry name" value="Bac_DnaA_C"/>
    <property type="match status" value="1"/>
</dbReference>
<dbReference type="Pfam" id="PF11638">
    <property type="entry name" value="DnaA_N"/>
    <property type="match status" value="1"/>
</dbReference>
<dbReference type="PRINTS" id="PR00051">
    <property type="entry name" value="DNAA"/>
</dbReference>
<dbReference type="SMART" id="SM00382">
    <property type="entry name" value="AAA"/>
    <property type="match status" value="1"/>
</dbReference>
<dbReference type="SMART" id="SM00760">
    <property type="entry name" value="Bac_DnaA_C"/>
    <property type="match status" value="1"/>
</dbReference>
<dbReference type="SUPFAM" id="SSF52540">
    <property type="entry name" value="P-loop containing nucleoside triphosphate hydrolases"/>
    <property type="match status" value="1"/>
</dbReference>
<dbReference type="SUPFAM" id="SSF48295">
    <property type="entry name" value="TrpR-like"/>
    <property type="match status" value="1"/>
</dbReference>
<dbReference type="PROSITE" id="PS01008">
    <property type="entry name" value="DNAA"/>
    <property type="match status" value="1"/>
</dbReference>
<reference key="1">
    <citation type="submission" date="2008-04" db="EMBL/GenBank/DDBJ databases">
        <title>Complete sequence of chromosome of Exiguobacterium sibiricum 255-15.</title>
        <authorList>
            <consortium name="US DOE Joint Genome Institute"/>
            <person name="Copeland A."/>
            <person name="Lucas S."/>
            <person name="Lapidus A."/>
            <person name="Glavina del Rio T."/>
            <person name="Dalin E."/>
            <person name="Tice H."/>
            <person name="Bruce D."/>
            <person name="Goodwin L."/>
            <person name="Pitluck S."/>
            <person name="Kiss H."/>
            <person name="Chertkov O."/>
            <person name="Monk C."/>
            <person name="Brettin T."/>
            <person name="Detter J.C."/>
            <person name="Han C."/>
            <person name="Kuske C.R."/>
            <person name="Schmutz J."/>
            <person name="Larimer F."/>
            <person name="Land M."/>
            <person name="Hauser L."/>
            <person name="Kyrpides N."/>
            <person name="Mikhailova N."/>
            <person name="Vishnivetskaya T."/>
            <person name="Rodrigues D.F."/>
            <person name="Gilichinsky D."/>
            <person name="Tiedje J."/>
            <person name="Richardson P."/>
        </authorList>
    </citation>
    <scope>NUCLEOTIDE SEQUENCE [LARGE SCALE GENOMIC DNA]</scope>
    <source>
        <strain>DSM 17290 / CCUG 55495 / CIP 109462 / JCM 13490 / 255-15</strain>
    </source>
</reference>
<feature type="chain" id="PRO_1000121982" description="Chromosomal replication initiator protein DnaA">
    <location>
        <begin position="1"/>
        <end position="464"/>
    </location>
</feature>
<feature type="region of interest" description="Domain I, interacts with DnaA modulators" evidence="1">
    <location>
        <begin position="1"/>
        <end position="82"/>
    </location>
</feature>
<feature type="region of interest" description="Domain II" evidence="1">
    <location>
        <begin position="82"/>
        <end position="125"/>
    </location>
</feature>
<feature type="region of interest" description="Domain III, AAA+ region" evidence="1">
    <location>
        <begin position="126"/>
        <end position="342"/>
    </location>
</feature>
<feature type="region of interest" description="Domain IV, binds dsDNA" evidence="1">
    <location>
        <begin position="343"/>
        <end position="464"/>
    </location>
</feature>
<feature type="binding site" evidence="1">
    <location>
        <position position="170"/>
    </location>
    <ligand>
        <name>ATP</name>
        <dbReference type="ChEBI" id="CHEBI:30616"/>
    </ligand>
</feature>
<feature type="binding site" evidence="1">
    <location>
        <position position="172"/>
    </location>
    <ligand>
        <name>ATP</name>
        <dbReference type="ChEBI" id="CHEBI:30616"/>
    </ligand>
</feature>
<feature type="binding site" evidence="1">
    <location>
        <position position="173"/>
    </location>
    <ligand>
        <name>ATP</name>
        <dbReference type="ChEBI" id="CHEBI:30616"/>
    </ligand>
</feature>
<feature type="binding site" evidence="1">
    <location>
        <position position="174"/>
    </location>
    <ligand>
        <name>ATP</name>
        <dbReference type="ChEBI" id="CHEBI:30616"/>
    </ligand>
</feature>